<reference key="1">
    <citation type="journal article" date="2008" name="PLoS Genet.">
        <title>Complete genome sequence of the complex carbohydrate-degrading marine bacterium, Saccharophagus degradans strain 2-40 T.</title>
        <authorList>
            <person name="Weiner R.M."/>
            <person name="Taylor L.E. II"/>
            <person name="Henrissat B."/>
            <person name="Hauser L."/>
            <person name="Land M."/>
            <person name="Coutinho P.M."/>
            <person name="Rancurel C."/>
            <person name="Saunders E.H."/>
            <person name="Longmire A.G."/>
            <person name="Zhang H."/>
            <person name="Bayer E.A."/>
            <person name="Gilbert H.J."/>
            <person name="Larimer F."/>
            <person name="Zhulin I.B."/>
            <person name="Ekborg N.A."/>
            <person name="Lamed R."/>
            <person name="Richardson P.M."/>
            <person name="Borovok I."/>
            <person name="Hutcheson S."/>
        </authorList>
    </citation>
    <scope>NUCLEOTIDE SEQUENCE [LARGE SCALE GENOMIC DNA]</scope>
    <source>
        <strain>2-40 / ATCC 43961 / DSM 17024</strain>
    </source>
</reference>
<organism>
    <name type="scientific">Saccharophagus degradans (strain 2-40 / ATCC 43961 / DSM 17024)</name>
    <dbReference type="NCBI Taxonomy" id="203122"/>
    <lineage>
        <taxon>Bacteria</taxon>
        <taxon>Pseudomonadati</taxon>
        <taxon>Pseudomonadota</taxon>
        <taxon>Gammaproteobacteria</taxon>
        <taxon>Cellvibrionales</taxon>
        <taxon>Cellvibrionaceae</taxon>
        <taxon>Saccharophagus</taxon>
    </lineage>
</organism>
<keyword id="KW-0963">Cytoplasm</keyword>
<keyword id="KW-1185">Reference proteome</keyword>
<keyword id="KW-0694">RNA-binding</keyword>
<accession>Q21H28</accession>
<protein>
    <recommendedName>
        <fullName evidence="1">SsrA-binding protein</fullName>
    </recommendedName>
    <alternativeName>
        <fullName evidence="1">Small protein B</fullName>
    </alternativeName>
</protein>
<feature type="chain" id="PRO_0000331092" description="SsrA-binding protein">
    <location>
        <begin position="1"/>
        <end position="159"/>
    </location>
</feature>
<evidence type="ECO:0000255" key="1">
    <source>
        <dbReference type="HAMAP-Rule" id="MF_00023"/>
    </source>
</evidence>
<evidence type="ECO:0000305" key="2"/>
<gene>
    <name evidence="1" type="primary">smpB</name>
    <name type="ordered locus">Sde_2741</name>
</gene>
<comment type="function">
    <text evidence="1">Required for rescue of stalled ribosomes mediated by trans-translation. Binds to transfer-messenger RNA (tmRNA), required for stable association of tmRNA with ribosomes. tmRNA and SmpB together mimic tRNA shape, replacing the anticodon stem-loop with SmpB. tmRNA is encoded by the ssrA gene; the 2 termini fold to resemble tRNA(Ala) and it encodes a 'tag peptide', a short internal open reading frame. During trans-translation Ala-aminoacylated tmRNA acts like a tRNA, entering the A-site of stalled ribosomes, displacing the stalled mRNA. The ribosome then switches to translate the ORF on the tmRNA; the nascent peptide is terminated with the 'tag peptide' encoded by the tmRNA and targeted for degradation. The ribosome is freed to recommence translation, which seems to be the essential function of trans-translation.</text>
</comment>
<comment type="subcellular location">
    <subcellularLocation>
        <location evidence="1">Cytoplasm</location>
    </subcellularLocation>
    <text evidence="1">The tmRNA-SmpB complex associates with stalled 70S ribosomes.</text>
</comment>
<comment type="similarity">
    <text evidence="1">Belongs to the SmpB family.</text>
</comment>
<comment type="sequence caution" evidence="2">
    <conflict type="erroneous initiation">
        <sequence resource="EMBL-CDS" id="ABD82001"/>
    </conflict>
    <text>Extended N-terminus.</text>
</comment>
<name>SSRP_SACD2</name>
<sequence>MSKANKKKKPQSSTIAQNKRARHDYFLETKFEAGVALLGWEVKALRAQRGQMTESYVLVQNGEAWLQGAQIQPLPQACTHYVTEPARPRKLLLNRRELNKIAEAKDQKGYTIVATSLYWKAHMVKCEIAIAKGKQLHDKRQTEKEREWNIQKQRVLYDK</sequence>
<dbReference type="EMBL" id="CP000282">
    <property type="protein sequence ID" value="ABD82001.1"/>
    <property type="status" value="ALT_INIT"/>
    <property type="molecule type" value="Genomic_DNA"/>
</dbReference>
<dbReference type="RefSeq" id="WP_041325803.1">
    <property type="nucleotide sequence ID" value="NC_007912.1"/>
</dbReference>
<dbReference type="SMR" id="Q21H28"/>
<dbReference type="STRING" id="203122.Sde_2741"/>
<dbReference type="GeneID" id="98614399"/>
<dbReference type="KEGG" id="sde:Sde_2741"/>
<dbReference type="eggNOG" id="COG0691">
    <property type="taxonomic scope" value="Bacteria"/>
</dbReference>
<dbReference type="HOGENOM" id="CLU_108953_3_0_6"/>
<dbReference type="OrthoDB" id="9805462at2"/>
<dbReference type="Proteomes" id="UP000001947">
    <property type="component" value="Chromosome"/>
</dbReference>
<dbReference type="GO" id="GO:0005829">
    <property type="term" value="C:cytosol"/>
    <property type="evidence" value="ECO:0007669"/>
    <property type="project" value="TreeGrafter"/>
</dbReference>
<dbReference type="GO" id="GO:0003723">
    <property type="term" value="F:RNA binding"/>
    <property type="evidence" value="ECO:0007669"/>
    <property type="project" value="UniProtKB-UniRule"/>
</dbReference>
<dbReference type="GO" id="GO:0070929">
    <property type="term" value="P:trans-translation"/>
    <property type="evidence" value="ECO:0007669"/>
    <property type="project" value="UniProtKB-UniRule"/>
</dbReference>
<dbReference type="CDD" id="cd09294">
    <property type="entry name" value="SmpB"/>
    <property type="match status" value="1"/>
</dbReference>
<dbReference type="Gene3D" id="2.40.280.10">
    <property type="match status" value="1"/>
</dbReference>
<dbReference type="HAMAP" id="MF_00023">
    <property type="entry name" value="SmpB"/>
    <property type="match status" value="1"/>
</dbReference>
<dbReference type="InterPro" id="IPR023620">
    <property type="entry name" value="SmpB"/>
</dbReference>
<dbReference type="InterPro" id="IPR000037">
    <property type="entry name" value="SsrA-bd_prot"/>
</dbReference>
<dbReference type="InterPro" id="IPR020081">
    <property type="entry name" value="SsrA-bd_prot_CS"/>
</dbReference>
<dbReference type="NCBIfam" id="NF003843">
    <property type="entry name" value="PRK05422.1"/>
    <property type="match status" value="1"/>
</dbReference>
<dbReference type="NCBIfam" id="TIGR00086">
    <property type="entry name" value="smpB"/>
    <property type="match status" value="1"/>
</dbReference>
<dbReference type="PANTHER" id="PTHR30308:SF2">
    <property type="entry name" value="SSRA-BINDING PROTEIN"/>
    <property type="match status" value="1"/>
</dbReference>
<dbReference type="PANTHER" id="PTHR30308">
    <property type="entry name" value="TMRNA-BINDING COMPONENT OF TRANS-TRANSLATION TAGGING COMPLEX"/>
    <property type="match status" value="1"/>
</dbReference>
<dbReference type="Pfam" id="PF01668">
    <property type="entry name" value="SmpB"/>
    <property type="match status" value="1"/>
</dbReference>
<dbReference type="SUPFAM" id="SSF74982">
    <property type="entry name" value="Small protein B (SmpB)"/>
    <property type="match status" value="1"/>
</dbReference>
<dbReference type="PROSITE" id="PS01317">
    <property type="entry name" value="SSRP"/>
    <property type="match status" value="1"/>
</dbReference>
<proteinExistence type="inferred from homology"/>